<feature type="chain" id="PRO_0000217931" description="Photosystem II reaction center protein T">
    <location>
        <begin position="1"/>
        <end position="35"/>
    </location>
</feature>
<feature type="transmembrane region" description="Helical" evidence="1">
    <location>
        <begin position="3"/>
        <end position="23"/>
    </location>
</feature>
<accession>Q6EYJ1</accession>
<evidence type="ECO:0000255" key="1">
    <source>
        <dbReference type="HAMAP-Rule" id="MF_00808"/>
    </source>
</evidence>
<gene>
    <name evidence="1" type="primary">psbT</name>
</gene>
<proteinExistence type="inferred from homology"/>
<reference key="1">
    <citation type="submission" date="2002-07" db="EMBL/GenBank/DDBJ databases">
        <title>Parsing out signal and noise for seed-plant phylogenetic inference.</title>
        <authorList>
            <person name="Graham S.W."/>
            <person name="Rai H.S."/>
            <person name="Ikegami K."/>
            <person name="Reeves P.A."/>
            <person name="Olmstead R.G."/>
        </authorList>
    </citation>
    <scope>NUCLEOTIDE SEQUENCE [GENOMIC DNA]</scope>
</reference>
<dbReference type="EMBL" id="AF528899">
    <property type="protein sequence ID" value="AAQ09382.1"/>
    <property type="molecule type" value="Genomic_DNA"/>
</dbReference>
<dbReference type="SMR" id="Q6EYJ1"/>
<dbReference type="GO" id="GO:0009535">
    <property type="term" value="C:chloroplast thylakoid membrane"/>
    <property type="evidence" value="ECO:0007669"/>
    <property type="project" value="UniProtKB-SubCell"/>
</dbReference>
<dbReference type="GO" id="GO:0009539">
    <property type="term" value="C:photosystem II reaction center"/>
    <property type="evidence" value="ECO:0007669"/>
    <property type="project" value="InterPro"/>
</dbReference>
<dbReference type="GO" id="GO:0015979">
    <property type="term" value="P:photosynthesis"/>
    <property type="evidence" value="ECO:0007669"/>
    <property type="project" value="UniProtKB-UniRule"/>
</dbReference>
<dbReference type="HAMAP" id="MF_00808">
    <property type="entry name" value="PSII_PsbT"/>
    <property type="match status" value="1"/>
</dbReference>
<dbReference type="InterPro" id="IPR001743">
    <property type="entry name" value="PSII_PsbT"/>
</dbReference>
<dbReference type="InterPro" id="IPR037268">
    <property type="entry name" value="PSII_PsbT_sf"/>
</dbReference>
<dbReference type="PANTHER" id="PTHR36411">
    <property type="match status" value="1"/>
</dbReference>
<dbReference type="PANTHER" id="PTHR36411:SF2">
    <property type="entry name" value="PHOTOSYSTEM II REACTION CENTER PROTEIN T"/>
    <property type="match status" value="1"/>
</dbReference>
<dbReference type="Pfam" id="PF01405">
    <property type="entry name" value="PsbT"/>
    <property type="match status" value="1"/>
</dbReference>
<dbReference type="SUPFAM" id="SSF161029">
    <property type="entry name" value="Photosystem II reaction center protein T, PsbT"/>
    <property type="match status" value="1"/>
</dbReference>
<name>PSBT_EUOAL</name>
<geneLocation type="chloroplast"/>
<organism>
    <name type="scientific">Euonymus alatus</name>
    <name type="common">Burning bush</name>
    <name type="synonym">Celastrus alatus</name>
    <dbReference type="NCBI Taxonomy" id="4307"/>
    <lineage>
        <taxon>Eukaryota</taxon>
        <taxon>Viridiplantae</taxon>
        <taxon>Streptophyta</taxon>
        <taxon>Embryophyta</taxon>
        <taxon>Tracheophyta</taxon>
        <taxon>Spermatophyta</taxon>
        <taxon>Magnoliopsida</taxon>
        <taxon>eudicotyledons</taxon>
        <taxon>Gunneridae</taxon>
        <taxon>Pentapetalae</taxon>
        <taxon>rosids</taxon>
        <taxon>fabids</taxon>
        <taxon>Celastrales</taxon>
        <taxon>Celastraceae</taxon>
        <taxon>Euonymus</taxon>
    </lineage>
</organism>
<comment type="function">
    <text evidence="1">Found at the monomer-monomer interface of the photosystem II (PS II) dimer, plays a role in assembly and dimerization of PSII. PSII is a light-driven water plastoquinone oxidoreductase, using light energy to abstract electrons from H(2)O, generating a proton gradient subsequently used for ATP formation.</text>
</comment>
<comment type="subunit">
    <text evidence="1">PSII is composed of 1 copy each of membrane proteins PsbA, PsbB, PsbC, PsbD, PsbE, PsbF, PsbH, PsbI, PsbJ, PsbK, PsbL, PsbM, PsbT, PsbY, PsbZ, Psb30/Ycf12, at least 3 peripheral proteins of the oxygen-evolving complex and a large number of cofactors. It forms dimeric complexes.</text>
</comment>
<comment type="subcellular location">
    <subcellularLocation>
        <location evidence="1">Plastid</location>
        <location evidence="1">Chloroplast thylakoid membrane</location>
        <topology evidence="1">Single-pass membrane protein</topology>
    </subcellularLocation>
</comment>
<comment type="similarity">
    <text evidence="1">Belongs to the PsbT family.</text>
</comment>
<keyword id="KW-0150">Chloroplast</keyword>
<keyword id="KW-0472">Membrane</keyword>
<keyword id="KW-0602">Photosynthesis</keyword>
<keyword id="KW-0604">Photosystem II</keyword>
<keyword id="KW-0934">Plastid</keyword>
<keyword id="KW-0793">Thylakoid</keyword>
<keyword id="KW-0812">Transmembrane</keyword>
<keyword id="KW-1133">Transmembrane helix</keyword>
<sequence>MEALVYTFLLVSTLGIIFFAIFFREPPKVPTKKMK</sequence>
<protein>
    <recommendedName>
        <fullName evidence="1">Photosystem II reaction center protein T</fullName>
        <shortName evidence="1">PSII-T</shortName>
    </recommendedName>
</protein>